<name>NUOK_BURM9</name>
<sequence length="101" mass="11084">MLTLAHYLVLGAILFAIAIVGIFLNRRNIIIILMAIELMLLAVNTNFVAFSHYLGDVHGQIFVFFVLTVAAAEAAIGLAILVTLFRKLDTINVEDLDQLKG</sequence>
<comment type="function">
    <text evidence="1">NDH-1 shuttles electrons from NADH, via FMN and iron-sulfur (Fe-S) centers, to quinones in the respiratory chain. The immediate electron acceptor for the enzyme in this species is believed to be ubiquinone. Couples the redox reaction to proton translocation (for every two electrons transferred, four hydrogen ions are translocated across the cytoplasmic membrane), and thus conserves the redox energy in a proton gradient.</text>
</comment>
<comment type="catalytic activity">
    <reaction evidence="1">
        <text>a quinone + NADH + 5 H(+)(in) = a quinol + NAD(+) + 4 H(+)(out)</text>
        <dbReference type="Rhea" id="RHEA:57888"/>
        <dbReference type="ChEBI" id="CHEBI:15378"/>
        <dbReference type="ChEBI" id="CHEBI:24646"/>
        <dbReference type="ChEBI" id="CHEBI:57540"/>
        <dbReference type="ChEBI" id="CHEBI:57945"/>
        <dbReference type="ChEBI" id="CHEBI:132124"/>
    </reaction>
</comment>
<comment type="subunit">
    <text evidence="1">NDH-1 is composed of 14 different subunits. Subunits NuoA, H, J, K, L, M, N constitute the membrane sector of the complex.</text>
</comment>
<comment type="subcellular location">
    <subcellularLocation>
        <location evidence="1">Cell inner membrane</location>
        <topology evidence="1">Multi-pass membrane protein</topology>
    </subcellularLocation>
</comment>
<comment type="similarity">
    <text evidence="1">Belongs to the complex I subunit 4L family.</text>
</comment>
<dbReference type="EC" id="7.1.1.-" evidence="1"/>
<dbReference type="EMBL" id="CP000546">
    <property type="protein sequence ID" value="ABN01891.1"/>
    <property type="molecule type" value="Genomic_DNA"/>
</dbReference>
<dbReference type="RefSeq" id="WP_004185739.1">
    <property type="nucleotide sequence ID" value="NC_008836.1"/>
</dbReference>
<dbReference type="SMR" id="A2S449"/>
<dbReference type="GeneID" id="98107315"/>
<dbReference type="KEGG" id="bml:BMA10229_A0727"/>
<dbReference type="HOGENOM" id="CLU_144724_2_0_4"/>
<dbReference type="Proteomes" id="UP000002283">
    <property type="component" value="Chromosome I"/>
</dbReference>
<dbReference type="GO" id="GO:0030964">
    <property type="term" value="C:NADH dehydrogenase complex"/>
    <property type="evidence" value="ECO:0007669"/>
    <property type="project" value="TreeGrafter"/>
</dbReference>
<dbReference type="GO" id="GO:0005886">
    <property type="term" value="C:plasma membrane"/>
    <property type="evidence" value="ECO:0007669"/>
    <property type="project" value="UniProtKB-SubCell"/>
</dbReference>
<dbReference type="GO" id="GO:0050136">
    <property type="term" value="F:NADH:ubiquinone reductase (non-electrogenic) activity"/>
    <property type="evidence" value="ECO:0007669"/>
    <property type="project" value="UniProtKB-UniRule"/>
</dbReference>
<dbReference type="GO" id="GO:0048038">
    <property type="term" value="F:quinone binding"/>
    <property type="evidence" value="ECO:0007669"/>
    <property type="project" value="UniProtKB-KW"/>
</dbReference>
<dbReference type="GO" id="GO:0042773">
    <property type="term" value="P:ATP synthesis coupled electron transport"/>
    <property type="evidence" value="ECO:0007669"/>
    <property type="project" value="InterPro"/>
</dbReference>
<dbReference type="FunFam" id="1.10.287.3510:FF:000001">
    <property type="entry name" value="NADH-quinone oxidoreductase subunit K"/>
    <property type="match status" value="1"/>
</dbReference>
<dbReference type="Gene3D" id="1.10.287.3510">
    <property type="match status" value="1"/>
</dbReference>
<dbReference type="HAMAP" id="MF_01456">
    <property type="entry name" value="NDH1_NuoK"/>
    <property type="match status" value="1"/>
</dbReference>
<dbReference type="InterPro" id="IPR001133">
    <property type="entry name" value="NADH_UbQ_OxRdtase_chain4L/K"/>
</dbReference>
<dbReference type="InterPro" id="IPR039428">
    <property type="entry name" value="NUOK/Mnh_C1-like"/>
</dbReference>
<dbReference type="NCBIfam" id="NF004320">
    <property type="entry name" value="PRK05715.1-2"/>
    <property type="match status" value="1"/>
</dbReference>
<dbReference type="NCBIfam" id="NF004321">
    <property type="entry name" value="PRK05715.1-3"/>
    <property type="match status" value="1"/>
</dbReference>
<dbReference type="NCBIfam" id="NF004323">
    <property type="entry name" value="PRK05715.1-5"/>
    <property type="match status" value="1"/>
</dbReference>
<dbReference type="PANTHER" id="PTHR11434:SF21">
    <property type="entry name" value="NADH DEHYDROGENASE SUBUNIT 4L-RELATED"/>
    <property type="match status" value="1"/>
</dbReference>
<dbReference type="PANTHER" id="PTHR11434">
    <property type="entry name" value="NADH-UBIQUINONE OXIDOREDUCTASE SUBUNIT ND4L"/>
    <property type="match status" value="1"/>
</dbReference>
<dbReference type="Pfam" id="PF00420">
    <property type="entry name" value="Oxidored_q2"/>
    <property type="match status" value="1"/>
</dbReference>
<organism>
    <name type="scientific">Burkholderia mallei (strain NCTC 10229)</name>
    <dbReference type="NCBI Taxonomy" id="412022"/>
    <lineage>
        <taxon>Bacteria</taxon>
        <taxon>Pseudomonadati</taxon>
        <taxon>Pseudomonadota</taxon>
        <taxon>Betaproteobacteria</taxon>
        <taxon>Burkholderiales</taxon>
        <taxon>Burkholderiaceae</taxon>
        <taxon>Burkholderia</taxon>
        <taxon>pseudomallei group</taxon>
    </lineage>
</organism>
<feature type="chain" id="PRO_0000389989" description="NADH-quinone oxidoreductase subunit K">
    <location>
        <begin position="1"/>
        <end position="101"/>
    </location>
</feature>
<feature type="transmembrane region" description="Helical" evidence="1">
    <location>
        <begin position="4"/>
        <end position="24"/>
    </location>
</feature>
<feature type="transmembrane region" description="Helical" evidence="1">
    <location>
        <begin position="29"/>
        <end position="49"/>
    </location>
</feature>
<feature type="transmembrane region" description="Helical" evidence="1">
    <location>
        <begin position="61"/>
        <end position="81"/>
    </location>
</feature>
<gene>
    <name evidence="1" type="primary">nuoK</name>
    <name type="ordered locus">BMA10229_A0727</name>
</gene>
<protein>
    <recommendedName>
        <fullName evidence="1">NADH-quinone oxidoreductase subunit K</fullName>
        <ecNumber evidence="1">7.1.1.-</ecNumber>
    </recommendedName>
    <alternativeName>
        <fullName evidence="1">NADH dehydrogenase I subunit K</fullName>
    </alternativeName>
    <alternativeName>
        <fullName evidence="1">NDH-1 subunit K</fullName>
    </alternativeName>
</protein>
<proteinExistence type="inferred from homology"/>
<accession>A2S449</accession>
<evidence type="ECO:0000255" key="1">
    <source>
        <dbReference type="HAMAP-Rule" id="MF_01456"/>
    </source>
</evidence>
<reference key="1">
    <citation type="journal article" date="2010" name="Genome Biol. Evol.">
        <title>Continuing evolution of Burkholderia mallei through genome reduction and large-scale rearrangements.</title>
        <authorList>
            <person name="Losada L."/>
            <person name="Ronning C.M."/>
            <person name="DeShazer D."/>
            <person name="Woods D."/>
            <person name="Fedorova N."/>
            <person name="Kim H.S."/>
            <person name="Shabalina S.A."/>
            <person name="Pearson T.R."/>
            <person name="Brinkac L."/>
            <person name="Tan P."/>
            <person name="Nandi T."/>
            <person name="Crabtree J."/>
            <person name="Badger J."/>
            <person name="Beckstrom-Sternberg S."/>
            <person name="Saqib M."/>
            <person name="Schutzer S.E."/>
            <person name="Keim P."/>
            <person name="Nierman W.C."/>
        </authorList>
    </citation>
    <scope>NUCLEOTIDE SEQUENCE [LARGE SCALE GENOMIC DNA]</scope>
    <source>
        <strain>NCTC 10229</strain>
    </source>
</reference>
<keyword id="KW-0997">Cell inner membrane</keyword>
<keyword id="KW-1003">Cell membrane</keyword>
<keyword id="KW-0472">Membrane</keyword>
<keyword id="KW-0520">NAD</keyword>
<keyword id="KW-0874">Quinone</keyword>
<keyword id="KW-1278">Translocase</keyword>
<keyword id="KW-0812">Transmembrane</keyword>
<keyword id="KW-1133">Transmembrane helix</keyword>
<keyword id="KW-0813">Transport</keyword>
<keyword id="KW-0830">Ubiquinone</keyword>